<protein>
    <recommendedName>
        <fullName>Casein kinase II subunit beta</fullName>
        <shortName>CK II beta</shortName>
    </recommendedName>
    <alternativeName>
        <fullName>Phosvitin</fullName>
    </alternativeName>
</protein>
<keyword id="KW-0002">3D-structure</keyword>
<keyword id="KW-0007">Acetylation</keyword>
<keyword id="KW-1017">Isopeptide bond</keyword>
<keyword id="KW-0479">Metal-binding</keyword>
<keyword id="KW-0539">Nucleus</keyword>
<keyword id="KW-0597">Phosphoprotein</keyword>
<keyword id="KW-1185">Reference proteome</keyword>
<keyword id="KW-0832">Ubl conjugation</keyword>
<keyword id="KW-0879">Wnt signaling pathway</keyword>
<keyword id="KW-0862">Zinc</keyword>
<reference key="1">
    <citation type="journal article" date="1993" name="Cell. Mol. Biol. Res.">
        <title>Cloning of cDNAs encoding the alpha and beta subunits of rat casein kinase 2 (CK-2): investigation of molecular regulation of CK-2 by androgens in rat ventral prostate.</title>
        <authorList>
            <person name="Ahmed K."/>
            <person name="Davis A."/>
            <person name="Hanten J."/>
            <person name="Lambert D."/>
            <person name="McIvor R.S."/>
            <person name="Goueli S.A."/>
        </authorList>
    </citation>
    <scope>NUCLEOTIDE SEQUENCE [MRNA]</scope>
    <source>
        <tissue>Liver</tissue>
    </source>
</reference>
<reference key="2">
    <citation type="journal article" date="2004" name="Genome Res.">
        <title>The genomic sequence and comparative analysis of the rat major histocompatibility complex.</title>
        <authorList>
            <person name="Hurt P."/>
            <person name="Walter L."/>
            <person name="Sudbrak R."/>
            <person name="Klages S."/>
            <person name="Mueller I."/>
            <person name="Shiina T."/>
            <person name="Inoko H."/>
            <person name="Lehrach H."/>
            <person name="Guenther E."/>
            <person name="Reinhardt R."/>
            <person name="Himmelbauer H."/>
        </authorList>
    </citation>
    <scope>NUCLEOTIDE SEQUENCE [LARGE SCALE GENOMIC DNA]</scope>
    <source>
        <strain>Brown Norway</strain>
    </source>
</reference>
<reference key="3">
    <citation type="journal article" date="2006" name="Genes Dev.">
        <title>Casein kinase 2-dependent serine phosphorylation of MuSK regulates acetylcholine receptor aggregation at the neuromuscular junction.</title>
        <authorList>
            <person name="Cheusova T."/>
            <person name="Khan M.A."/>
            <person name="Schubert S.W."/>
            <person name="Gavin A.C."/>
            <person name="Buchou T."/>
            <person name="Jacob G."/>
            <person name="Sticht H."/>
            <person name="Allende J."/>
            <person name="Boldyreff B."/>
            <person name="Brenner H.R."/>
            <person name="Hashemolhosseini S."/>
        </authorList>
    </citation>
    <scope>FUNCTION IN PHOSPHORYLATION OF MUSK</scope>
    <scope>INTERACTION WITH MUSK</scope>
</reference>
<reference key="4">
    <citation type="journal article" date="2012" name="Nat. Commun.">
        <title>Quantitative maps of protein phosphorylation sites across 14 different rat organs and tissues.</title>
        <authorList>
            <person name="Lundby A."/>
            <person name="Secher A."/>
            <person name="Lage K."/>
            <person name="Nordsborg N.B."/>
            <person name="Dmytriyev A."/>
            <person name="Lundby C."/>
            <person name="Olsen J.V."/>
        </authorList>
    </citation>
    <scope>IDENTIFICATION BY MASS SPECTROMETRY [LARGE SCALE ANALYSIS]</scope>
</reference>
<reference key="5">
    <citation type="journal article" date="2009" name="Chin. Sci. Bull.">
        <title>Crystal structures of catalytic and regulatory subunits of rat protein kinase CK2.</title>
        <authorList>
            <person name="Zhou W."/>
            <person name="Qin X."/>
            <person name="Yan X."/>
            <person name="Xie X."/>
            <person name="Li L."/>
            <person name="Fang S."/>
            <person name="Long J."/>
            <person name="Adelman J."/>
            <person name="Tang W.-J."/>
            <person name="Shen Y."/>
        </authorList>
    </citation>
    <scope>X-RAY CRYSTALLOGRAPHY (3.1 ANGSTROMS)</scope>
    <scope>SUBUNIT</scope>
    <scope>ZINC-BINDING SITES</scope>
</reference>
<name>CSK2B_RAT</name>
<evidence type="ECO:0000250" key="1"/>
<evidence type="ECO:0000250" key="2">
    <source>
        <dbReference type="UniProtKB" id="P67870"/>
    </source>
</evidence>
<evidence type="ECO:0000250" key="3">
    <source>
        <dbReference type="UniProtKB" id="P67871"/>
    </source>
</evidence>
<evidence type="ECO:0000269" key="4">
    <source>
    </source>
</evidence>
<evidence type="ECO:0000305" key="5"/>
<evidence type="ECO:0007829" key="6">
    <source>
        <dbReference type="PDB" id="2R6M"/>
    </source>
</evidence>
<organism>
    <name type="scientific">Rattus norvegicus</name>
    <name type="common">Rat</name>
    <dbReference type="NCBI Taxonomy" id="10116"/>
    <lineage>
        <taxon>Eukaryota</taxon>
        <taxon>Metazoa</taxon>
        <taxon>Chordata</taxon>
        <taxon>Craniata</taxon>
        <taxon>Vertebrata</taxon>
        <taxon>Euteleostomi</taxon>
        <taxon>Mammalia</taxon>
        <taxon>Eutheria</taxon>
        <taxon>Euarchontoglires</taxon>
        <taxon>Glires</taxon>
        <taxon>Rodentia</taxon>
        <taxon>Myomorpha</taxon>
        <taxon>Muroidea</taxon>
        <taxon>Muridae</taxon>
        <taxon>Murinae</taxon>
        <taxon>Rattus</taxon>
    </lineage>
</organism>
<proteinExistence type="evidence at protein level"/>
<accession>P67874</accession>
<accession>P07312</accession>
<accession>P13862</accession>
<feature type="initiator methionine" description="Removed" evidence="2">
    <location>
        <position position="1"/>
    </location>
</feature>
<feature type="chain" id="PRO_0000068240" description="Casein kinase II subunit beta">
    <location>
        <begin position="2"/>
        <end position="215"/>
    </location>
</feature>
<feature type="region of interest" description="Interaction with alpha subunit">
    <location>
        <begin position="188"/>
        <end position="193"/>
    </location>
</feature>
<feature type="short sequence motif" description="KSSR motif" evidence="2">
    <location>
        <begin position="147"/>
        <end position="150"/>
    </location>
</feature>
<feature type="binding site">
    <location>
        <position position="109"/>
    </location>
    <ligand>
        <name>Zn(2+)</name>
        <dbReference type="ChEBI" id="CHEBI:29105"/>
    </ligand>
</feature>
<feature type="binding site">
    <location>
        <position position="114"/>
    </location>
    <ligand>
        <name>Zn(2+)</name>
        <dbReference type="ChEBI" id="CHEBI:29105"/>
    </ligand>
</feature>
<feature type="binding site">
    <location>
        <position position="137"/>
    </location>
    <ligand>
        <name>Zn(2+)</name>
        <dbReference type="ChEBI" id="CHEBI:29105"/>
    </ligand>
</feature>
<feature type="binding site">
    <location>
        <position position="140"/>
    </location>
    <ligand>
        <name>Zn(2+)</name>
        <dbReference type="ChEBI" id="CHEBI:29105"/>
    </ligand>
</feature>
<feature type="modified residue" description="N-acetylserine" evidence="2">
    <location>
        <position position="2"/>
    </location>
</feature>
<feature type="modified residue" description="Phosphoserine; by autocatalysis" evidence="2 5">
    <location>
        <position position="2"/>
    </location>
</feature>
<feature type="modified residue" description="Phosphoserine; by autocatalysis" evidence="2">
    <location>
        <position position="3"/>
    </location>
</feature>
<feature type="modified residue" description="Phosphoserine" evidence="2">
    <location>
        <position position="8"/>
    </location>
</feature>
<feature type="modified residue" description="Phosphothreonine" evidence="2">
    <location>
        <position position="37"/>
    </location>
</feature>
<feature type="modified residue" description="Phosphoserine" evidence="2">
    <location>
        <position position="69"/>
    </location>
</feature>
<feature type="modified residue" description="Phosphoserine" evidence="2">
    <location>
        <position position="209"/>
    </location>
</feature>
<feature type="modified residue" description="N6-acetyllysine; alternate" evidence="2">
    <location>
        <position position="212"/>
    </location>
</feature>
<feature type="cross-link" description="Glycyl lysine isopeptide (Lys-Gly) (interchain with G-Cter in SUMO2); alternate" evidence="2">
    <location>
        <position position="212"/>
    </location>
</feature>
<feature type="helix" evidence="6">
    <location>
        <begin position="9"/>
        <end position="15"/>
    </location>
</feature>
<feature type="helix" evidence="6">
    <location>
        <begin position="27"/>
        <end position="31"/>
    </location>
</feature>
<feature type="helix" evidence="6">
    <location>
        <begin position="33"/>
        <end position="35"/>
    </location>
</feature>
<feature type="turn" evidence="6">
    <location>
        <begin position="37"/>
        <end position="42"/>
    </location>
</feature>
<feature type="helix" evidence="6">
    <location>
        <begin position="46"/>
        <end position="53"/>
    </location>
</feature>
<feature type="turn" evidence="6">
    <location>
        <begin position="70"/>
        <end position="73"/>
    </location>
</feature>
<feature type="helix" evidence="6">
    <location>
        <begin position="74"/>
        <end position="87"/>
    </location>
</feature>
<feature type="helix" evidence="6">
    <location>
        <begin position="91"/>
        <end position="102"/>
    </location>
</feature>
<feature type="turn" evidence="6">
    <location>
        <begin position="103"/>
        <end position="106"/>
    </location>
</feature>
<feature type="helix" evidence="6">
    <location>
        <begin position="112"/>
        <end position="114"/>
    </location>
</feature>
<feature type="strand" evidence="6">
    <location>
        <begin position="120"/>
        <end position="122"/>
    </location>
</feature>
<feature type="strand" evidence="6">
    <location>
        <begin position="126"/>
        <end position="130"/>
    </location>
</feature>
<feature type="strand" evidence="6">
    <location>
        <begin position="134"/>
        <end position="137"/>
    </location>
</feature>
<feature type="turn" evidence="6">
    <location>
        <begin position="138"/>
        <end position="141"/>
    </location>
</feature>
<feature type="strand" evidence="6">
    <location>
        <begin position="142"/>
        <end position="144"/>
    </location>
</feature>
<feature type="strand" evidence="6">
    <location>
        <begin position="147"/>
        <end position="149"/>
    </location>
</feature>
<feature type="helix" evidence="6">
    <location>
        <begin position="156"/>
        <end position="158"/>
    </location>
</feature>
<feature type="helix" evidence="6">
    <location>
        <begin position="163"/>
        <end position="168"/>
    </location>
</feature>
<feature type="helix" evidence="6">
    <location>
        <begin position="172"/>
        <end position="174"/>
    </location>
</feature>
<feature type="strand" evidence="6">
    <location>
        <begin position="186"/>
        <end position="191"/>
    </location>
</feature>
<gene>
    <name type="primary">Csnk2b</name>
    <name type="synonym">Ck2n</name>
</gene>
<comment type="function">
    <text evidence="3 4">Regulatory subunit of casein kinase II/CK2. As part of the kinase complex regulates the basal catalytic activity of the alpha subunit a constitutively active serine/threonine-protein kinase that phosphorylates a large number of substrates containing acidic residues C-terminal to the phosphorylated serine or threonine (PubMed:16818610). Participates in Wnt signaling (By similarity).</text>
</comment>
<comment type="subunit">
    <text evidence="1 2">Casein kinase II/CK2 is a tetramer composed of an alpha subunit, an alpha' subunit and two beta subunits. The beta subunit dimerization is mediated by zinc ions. Interacts with DYNLT2 (By similarity). Interacts with CD163. Also a component of a CK2-SPT16-SSRP1 complex composed of SSRP1, SUPT16H, CSNK2A1, CSNK2A2 and CSNK2B, the complex associating following UV irradiation. Interacts with MUSK; mediates phosphorylation of MUSK by CK2. Interacts with FGF1; this interaction is increased in the presence of FIBP, suggesting a possible cooperative interaction between CSNKB and FIBP in binding to FGF1 (By similarity). Interacts (via KSSR motif) with ARK2N. Interacts with JUN and ARK2N; mediates the interaction between ARK2N and JUN (By similarity).</text>
</comment>
<comment type="subcellular location">
    <subcellularLocation>
        <location evidence="2">Nucleus</location>
    </subcellularLocation>
</comment>
<comment type="domain">
    <text evidence="2">The KSSR motif is part of a protein interaction pocket that mediates interaction with cellular and viral proteins.</text>
</comment>
<comment type="PTM">
    <text evidence="1">Phosphorylated by alpha subunit. Also a component of a CK2-SPT16-SSRP1 complex composed of SSRP1, SUPT16H, CSNK2A1, CSNK2A2 and CSNK2B, the complex associating following UV irradiation (By similarity).</text>
</comment>
<comment type="similarity">
    <text evidence="5">Belongs to the casein kinase 2 subunit beta family.</text>
</comment>
<dbReference type="EMBL" id="L15619">
    <property type="protein sequence ID" value="AAA40928.1"/>
    <property type="molecule type" value="mRNA"/>
</dbReference>
<dbReference type="EMBL" id="BX883045">
    <property type="protein sequence ID" value="CAE83994.1"/>
    <property type="molecule type" value="Genomic_DNA"/>
</dbReference>
<dbReference type="RefSeq" id="NP_001030315.1">
    <property type="nucleotide sequence ID" value="NM_001035238.2"/>
</dbReference>
<dbReference type="RefSeq" id="NP_112283.1">
    <property type="nucleotide sequence ID" value="NM_031021.3"/>
</dbReference>
<dbReference type="PDB" id="2R6M">
    <property type="method" value="X-ray"/>
    <property type="resolution" value="3.10 A"/>
    <property type="chains" value="A/B=1-215"/>
</dbReference>
<dbReference type="PDBsum" id="2R6M"/>
<dbReference type="SMR" id="P67874"/>
<dbReference type="BioGRID" id="249550">
    <property type="interactions" value="9"/>
</dbReference>
<dbReference type="CORUM" id="P67874"/>
<dbReference type="FunCoup" id="P67874">
    <property type="interactions" value="3904"/>
</dbReference>
<dbReference type="IntAct" id="P67874">
    <property type="interactions" value="3"/>
</dbReference>
<dbReference type="MINT" id="P67874"/>
<dbReference type="STRING" id="10116.ENSRNOP00000001123"/>
<dbReference type="BindingDB" id="P67874"/>
<dbReference type="ChEMBL" id="CHEMBL3988629"/>
<dbReference type="iPTMnet" id="P67874"/>
<dbReference type="PhosphoSitePlus" id="P67874"/>
<dbReference type="SwissPalm" id="P67874"/>
<dbReference type="jPOST" id="P67874"/>
<dbReference type="PaxDb" id="10116-ENSRNOP00000001123"/>
<dbReference type="GeneID" id="81650"/>
<dbReference type="KEGG" id="rno:81650"/>
<dbReference type="UCSC" id="RGD:619978">
    <property type="organism name" value="rat"/>
</dbReference>
<dbReference type="AGR" id="RGD:619978"/>
<dbReference type="CTD" id="1460"/>
<dbReference type="RGD" id="619978">
    <property type="gene designation" value="Csnk2b"/>
</dbReference>
<dbReference type="VEuPathDB" id="HostDB:ENSRNOG00000000847"/>
<dbReference type="eggNOG" id="KOG3092">
    <property type="taxonomic scope" value="Eukaryota"/>
</dbReference>
<dbReference type="HOGENOM" id="CLU_034027_3_3_1"/>
<dbReference type="InParanoid" id="P67874"/>
<dbReference type="PhylomeDB" id="P67874"/>
<dbReference type="TreeFam" id="TF314462"/>
<dbReference type="Reactome" id="R-RNO-1483191">
    <property type="pathway name" value="Synthesis of PC"/>
</dbReference>
<dbReference type="Reactome" id="R-RNO-201688">
    <property type="pathway name" value="WNT mediated activation of DVL"/>
</dbReference>
<dbReference type="Reactome" id="R-RNO-2514853">
    <property type="pathway name" value="Condensation of Prometaphase Chromosomes"/>
</dbReference>
<dbReference type="Reactome" id="R-RNO-445144">
    <property type="pathway name" value="Signal transduction by L1"/>
</dbReference>
<dbReference type="Reactome" id="R-RNO-6798695">
    <property type="pathway name" value="Neutrophil degranulation"/>
</dbReference>
<dbReference type="Reactome" id="R-RNO-6804756">
    <property type="pathway name" value="Regulation of TP53 Activity through Phosphorylation"/>
</dbReference>
<dbReference type="Reactome" id="R-RNO-6814122">
    <property type="pathway name" value="Cooperation of PDCL (PhLP1) and TRiC/CCT in G-protein beta folding"/>
</dbReference>
<dbReference type="Reactome" id="R-RNO-8934903">
    <property type="pathway name" value="Receptor Mediated Mitophagy"/>
</dbReference>
<dbReference type="Reactome" id="R-RNO-8939243">
    <property type="pathway name" value="RUNX1 interacts with co-factors whose precise effect on RUNX1 targets is not known"/>
</dbReference>
<dbReference type="Reactome" id="R-RNO-8948751">
    <property type="pathway name" value="Regulation of PTEN stability and activity"/>
</dbReference>
<dbReference type="CD-CODE" id="34881ED2">
    <property type="entry name" value="Nucleolus"/>
</dbReference>
<dbReference type="EvolutionaryTrace" id="P67874"/>
<dbReference type="PRO" id="PR:P67874"/>
<dbReference type="Proteomes" id="UP000002494">
    <property type="component" value="Chromosome 20"/>
</dbReference>
<dbReference type="Bgee" id="ENSRNOG00000000847">
    <property type="expression patterns" value="Expressed in testis and 20 other cell types or tissues"/>
</dbReference>
<dbReference type="ExpressionAtlas" id="P67874">
    <property type="expression patterns" value="baseline and differential"/>
</dbReference>
<dbReference type="GO" id="GO:0042995">
    <property type="term" value="C:cell projection"/>
    <property type="evidence" value="ECO:0000314"/>
    <property type="project" value="RGD"/>
</dbReference>
<dbReference type="GO" id="GO:0000785">
    <property type="term" value="C:chromatin"/>
    <property type="evidence" value="ECO:0000314"/>
    <property type="project" value="RGD"/>
</dbReference>
<dbReference type="GO" id="GO:0005737">
    <property type="term" value="C:cytoplasm"/>
    <property type="evidence" value="ECO:0000266"/>
    <property type="project" value="RGD"/>
</dbReference>
<dbReference type="GO" id="GO:0016363">
    <property type="term" value="C:nuclear matrix"/>
    <property type="evidence" value="ECO:0000314"/>
    <property type="project" value="RGD"/>
</dbReference>
<dbReference type="GO" id="GO:0005634">
    <property type="term" value="C:nucleus"/>
    <property type="evidence" value="ECO:0000266"/>
    <property type="project" value="RGD"/>
</dbReference>
<dbReference type="GO" id="GO:0031519">
    <property type="term" value="C:PcG protein complex"/>
    <property type="evidence" value="ECO:0000266"/>
    <property type="project" value="RGD"/>
</dbReference>
<dbReference type="GO" id="GO:0005886">
    <property type="term" value="C:plasma membrane"/>
    <property type="evidence" value="ECO:0000266"/>
    <property type="project" value="RGD"/>
</dbReference>
<dbReference type="GO" id="GO:0016605">
    <property type="term" value="C:PML body"/>
    <property type="evidence" value="ECO:0000266"/>
    <property type="project" value="RGD"/>
</dbReference>
<dbReference type="GO" id="GO:0005956">
    <property type="term" value="C:protein kinase CK2 complex"/>
    <property type="evidence" value="ECO:0000266"/>
    <property type="project" value="RGD"/>
</dbReference>
<dbReference type="GO" id="GO:0003682">
    <property type="term" value="F:chromatin binding"/>
    <property type="evidence" value="ECO:0000266"/>
    <property type="project" value="RGD"/>
</dbReference>
<dbReference type="GO" id="GO:0042802">
    <property type="term" value="F:identical protein binding"/>
    <property type="evidence" value="ECO:0000266"/>
    <property type="project" value="RGD"/>
</dbReference>
<dbReference type="GO" id="GO:0046872">
    <property type="term" value="F:metal ion binding"/>
    <property type="evidence" value="ECO:0007669"/>
    <property type="project" value="UniProtKB-KW"/>
</dbReference>
<dbReference type="GO" id="GO:0019904">
    <property type="term" value="F:protein domain specific binding"/>
    <property type="evidence" value="ECO:0000266"/>
    <property type="project" value="RGD"/>
</dbReference>
<dbReference type="GO" id="GO:0019887">
    <property type="term" value="F:protein kinase regulator activity"/>
    <property type="evidence" value="ECO:0000318"/>
    <property type="project" value="GO_Central"/>
</dbReference>
<dbReference type="GO" id="GO:0004674">
    <property type="term" value="F:protein serine/threonine kinase activity"/>
    <property type="evidence" value="ECO:0000266"/>
    <property type="project" value="RGD"/>
</dbReference>
<dbReference type="GO" id="GO:0030674">
    <property type="term" value="F:protein-macromolecule adaptor activity"/>
    <property type="evidence" value="ECO:0000266"/>
    <property type="project" value="RGD"/>
</dbReference>
<dbReference type="GO" id="GO:0043021">
    <property type="term" value="F:ribonucleoprotein complex binding"/>
    <property type="evidence" value="ECO:0000314"/>
    <property type="project" value="RGD"/>
</dbReference>
<dbReference type="GO" id="GO:0061629">
    <property type="term" value="F:RNA polymerase II-specific DNA-binding transcription factor binding"/>
    <property type="evidence" value="ECO:0000266"/>
    <property type="project" value="RGD"/>
</dbReference>
<dbReference type="GO" id="GO:0005102">
    <property type="term" value="F:signaling receptor binding"/>
    <property type="evidence" value="ECO:0000266"/>
    <property type="project" value="RGD"/>
</dbReference>
<dbReference type="GO" id="GO:0033211">
    <property type="term" value="P:adiponectin-activated signaling pathway"/>
    <property type="evidence" value="ECO:0000266"/>
    <property type="project" value="RGD"/>
</dbReference>
<dbReference type="GO" id="GO:0061154">
    <property type="term" value="P:endothelial tube morphogenesis"/>
    <property type="evidence" value="ECO:0000266"/>
    <property type="project" value="RGD"/>
</dbReference>
<dbReference type="GO" id="GO:0097421">
    <property type="term" value="P:liver regeneration"/>
    <property type="evidence" value="ECO:0000270"/>
    <property type="project" value="RGD"/>
</dbReference>
<dbReference type="GO" id="GO:0043537">
    <property type="term" value="P:negative regulation of blood vessel endothelial cell migration"/>
    <property type="evidence" value="ECO:0000266"/>
    <property type="project" value="RGD"/>
</dbReference>
<dbReference type="GO" id="GO:0032435">
    <property type="term" value="P:negative regulation of proteasomal ubiquitin-dependent protein catabolic process"/>
    <property type="evidence" value="ECO:0000266"/>
    <property type="project" value="RGD"/>
</dbReference>
<dbReference type="GO" id="GO:1903901">
    <property type="term" value="P:negative regulation of viral life cycle"/>
    <property type="evidence" value="ECO:0000266"/>
    <property type="project" value="RGD"/>
</dbReference>
<dbReference type="GO" id="GO:0032927">
    <property type="term" value="P:positive regulation of activin receptor signaling pathway"/>
    <property type="evidence" value="ECO:0000266"/>
    <property type="project" value="RGD"/>
</dbReference>
<dbReference type="GO" id="GO:0060391">
    <property type="term" value="P:positive regulation of SMAD protein signal transduction"/>
    <property type="evidence" value="ECO:0000266"/>
    <property type="project" value="RGD"/>
</dbReference>
<dbReference type="GO" id="GO:0033574">
    <property type="term" value="P:response to testosterone"/>
    <property type="evidence" value="ECO:0000270"/>
    <property type="project" value="RGD"/>
</dbReference>
<dbReference type="GO" id="GO:0075342">
    <property type="term" value="P:symbiont-mediated disruption of host cell PML body"/>
    <property type="evidence" value="ECO:0000266"/>
    <property type="project" value="RGD"/>
</dbReference>
<dbReference type="GO" id="GO:0016055">
    <property type="term" value="P:Wnt signaling pathway"/>
    <property type="evidence" value="ECO:0007669"/>
    <property type="project" value="UniProtKB-KW"/>
</dbReference>
<dbReference type="FunFam" id="1.10.1820.10:FF:000001">
    <property type="entry name" value="Casein kinase II subunit beta"/>
    <property type="match status" value="1"/>
</dbReference>
<dbReference type="FunFam" id="2.20.25.20:FF:000002">
    <property type="entry name" value="Casein kinase II subunit beta"/>
    <property type="match status" value="1"/>
</dbReference>
<dbReference type="Gene3D" id="2.20.25.20">
    <property type="match status" value="1"/>
</dbReference>
<dbReference type="Gene3D" id="1.10.1820.10">
    <property type="entry name" value="protein kinase ck2 holoenzyme, chain C, domain 1"/>
    <property type="match status" value="1"/>
</dbReference>
<dbReference type="InterPro" id="IPR016149">
    <property type="entry name" value="Casein_kin_II_reg-sub_N"/>
</dbReference>
<dbReference type="InterPro" id="IPR035991">
    <property type="entry name" value="Casein_kinase_II_beta-like"/>
</dbReference>
<dbReference type="InterPro" id="IPR000704">
    <property type="entry name" value="Casein_kinase_II_reg-sub"/>
</dbReference>
<dbReference type="PANTHER" id="PTHR11740">
    <property type="entry name" value="CASEIN KINASE II SUBUNIT BETA"/>
    <property type="match status" value="1"/>
</dbReference>
<dbReference type="PANTHER" id="PTHR11740:SF0">
    <property type="entry name" value="CASEIN KINASE II SUBUNIT BETA"/>
    <property type="match status" value="1"/>
</dbReference>
<dbReference type="Pfam" id="PF01214">
    <property type="entry name" value="CK_II_beta"/>
    <property type="match status" value="1"/>
</dbReference>
<dbReference type="PRINTS" id="PR00472">
    <property type="entry name" value="CASNKINASEII"/>
</dbReference>
<dbReference type="SMART" id="SM01085">
    <property type="entry name" value="CK_II_beta"/>
    <property type="match status" value="1"/>
</dbReference>
<dbReference type="SUPFAM" id="SSF57798">
    <property type="entry name" value="Casein kinase II beta subunit"/>
    <property type="match status" value="1"/>
</dbReference>
<dbReference type="PROSITE" id="PS01101">
    <property type="entry name" value="CK2_BETA"/>
    <property type="match status" value="1"/>
</dbReference>
<sequence>MSSSEEVSWISWFCGLRGNEFFCEVDEDYIQDKFNLTGLNEQVPHYRQALDMILDLEPDEELEDNPNQSDLIEQAAEMLYGLIHARYILTNRGIAQMLEKYQQGDFGYCPRVYCENQPMLPIGLSDIPGEAMVKLYCPKCMDVYTPKSSRHHHTDGAYFGTGFPHMLFMVHPEYRPKRPANQFVPRLYGFKIHPMAYQLQLQAASNFKSPVKTIR</sequence>